<evidence type="ECO:0000255" key="1">
    <source>
        <dbReference type="HAMAP-Rule" id="MF_00003"/>
    </source>
</evidence>
<comment type="function">
    <text evidence="1">One of several proteins that assist in the late maturation steps of the functional core of the 30S ribosomal subunit. Associates with free 30S ribosomal subunits (but not with 30S subunits that are part of 70S ribosomes or polysomes). Required for efficient processing of 16S rRNA. May interact with the 5'-terminal helix region of 16S rRNA.</text>
</comment>
<comment type="subunit">
    <text evidence="1">Monomer. Binds 30S ribosomal subunits, but not 50S ribosomal subunits or 70S ribosomes.</text>
</comment>
<comment type="subcellular location">
    <subcellularLocation>
        <location evidence="1">Cytoplasm</location>
    </subcellularLocation>
</comment>
<comment type="similarity">
    <text evidence="1">Belongs to the RbfA family.</text>
</comment>
<dbReference type="EMBL" id="CP001129">
    <property type="protein sequence ID" value="ACG61817.1"/>
    <property type="molecule type" value="Genomic_DNA"/>
</dbReference>
<dbReference type="RefSeq" id="WP_012515093.1">
    <property type="nucleotide sequence ID" value="NC_011134.1"/>
</dbReference>
<dbReference type="SMR" id="B4U1F0"/>
<dbReference type="GeneID" id="83704322"/>
<dbReference type="KEGG" id="sez:Sez_0445"/>
<dbReference type="HOGENOM" id="CLU_089475_3_0_9"/>
<dbReference type="Proteomes" id="UP000001873">
    <property type="component" value="Chromosome"/>
</dbReference>
<dbReference type="GO" id="GO:0005829">
    <property type="term" value="C:cytosol"/>
    <property type="evidence" value="ECO:0007669"/>
    <property type="project" value="TreeGrafter"/>
</dbReference>
<dbReference type="GO" id="GO:0043024">
    <property type="term" value="F:ribosomal small subunit binding"/>
    <property type="evidence" value="ECO:0007669"/>
    <property type="project" value="TreeGrafter"/>
</dbReference>
<dbReference type="GO" id="GO:0030490">
    <property type="term" value="P:maturation of SSU-rRNA"/>
    <property type="evidence" value="ECO:0007669"/>
    <property type="project" value="UniProtKB-UniRule"/>
</dbReference>
<dbReference type="Gene3D" id="3.30.300.20">
    <property type="match status" value="1"/>
</dbReference>
<dbReference type="HAMAP" id="MF_00003">
    <property type="entry name" value="RbfA"/>
    <property type="match status" value="1"/>
</dbReference>
<dbReference type="InterPro" id="IPR015946">
    <property type="entry name" value="KH_dom-like_a/b"/>
</dbReference>
<dbReference type="InterPro" id="IPR000238">
    <property type="entry name" value="RbfA"/>
</dbReference>
<dbReference type="InterPro" id="IPR023799">
    <property type="entry name" value="RbfA_dom_sf"/>
</dbReference>
<dbReference type="InterPro" id="IPR020053">
    <property type="entry name" value="Ribosome-bd_factorA_CS"/>
</dbReference>
<dbReference type="NCBIfam" id="TIGR00082">
    <property type="entry name" value="rbfA"/>
    <property type="match status" value="1"/>
</dbReference>
<dbReference type="PANTHER" id="PTHR33515">
    <property type="entry name" value="RIBOSOME-BINDING FACTOR A, CHLOROPLASTIC-RELATED"/>
    <property type="match status" value="1"/>
</dbReference>
<dbReference type="PANTHER" id="PTHR33515:SF1">
    <property type="entry name" value="RIBOSOME-BINDING FACTOR A, CHLOROPLASTIC-RELATED"/>
    <property type="match status" value="1"/>
</dbReference>
<dbReference type="Pfam" id="PF02033">
    <property type="entry name" value="RBFA"/>
    <property type="match status" value="1"/>
</dbReference>
<dbReference type="SUPFAM" id="SSF89919">
    <property type="entry name" value="Ribosome-binding factor A, RbfA"/>
    <property type="match status" value="1"/>
</dbReference>
<dbReference type="PROSITE" id="PS01319">
    <property type="entry name" value="RBFA"/>
    <property type="match status" value="1"/>
</dbReference>
<organism>
    <name type="scientific">Streptococcus equi subsp. zooepidemicus (strain MGCS10565)</name>
    <dbReference type="NCBI Taxonomy" id="552526"/>
    <lineage>
        <taxon>Bacteria</taxon>
        <taxon>Bacillati</taxon>
        <taxon>Bacillota</taxon>
        <taxon>Bacilli</taxon>
        <taxon>Lactobacillales</taxon>
        <taxon>Streptococcaceae</taxon>
        <taxon>Streptococcus</taxon>
    </lineage>
</organism>
<gene>
    <name evidence="1" type="primary">rbfA</name>
    <name type="ordered locus">Sez_0445</name>
</gene>
<accession>B4U1F0</accession>
<keyword id="KW-0963">Cytoplasm</keyword>
<keyword id="KW-0690">Ribosome biogenesis</keyword>
<reference key="1">
    <citation type="journal article" date="2008" name="PLoS ONE">
        <title>Genome sequence of a lancefield group C Streptococcus zooepidemicus strain causing epidemic nephritis: new information about an old disease.</title>
        <authorList>
            <person name="Beres S.B."/>
            <person name="Sesso R."/>
            <person name="Pinto S.W.L."/>
            <person name="Hoe N.P."/>
            <person name="Porcella S.F."/>
            <person name="Deleo F.R."/>
            <person name="Musser J.M."/>
        </authorList>
    </citation>
    <scope>NUCLEOTIDE SEQUENCE [LARGE SCALE GENOMIC DNA]</scope>
    <source>
        <strain>MGCS10565</strain>
    </source>
</reference>
<proteinExistence type="inferred from homology"/>
<protein>
    <recommendedName>
        <fullName evidence="1">Ribosome-binding factor A</fullName>
    </recommendedName>
</protein>
<feature type="chain" id="PRO_1000088933" description="Ribosome-binding factor A">
    <location>
        <begin position="1"/>
        <end position="116"/>
    </location>
</feature>
<name>RBFA_STREM</name>
<sequence length="116" mass="13332">MTNHRIDRVGMEIKREVNEILHKKVRDPRVQGVTITEVQMLGDLSVAKVYYTIMSDLASDNQKAEIGLKKATGTIKRELGKQLTMYKIPDLVFEKDNSIAYGNKIDQLLRELEKKQ</sequence>